<organism>
    <name type="scientific">Rubrobacter xylanophilus (strain DSM 9941 / JCM 11954 / NBRC 16129 / PRD-1)</name>
    <dbReference type="NCBI Taxonomy" id="266117"/>
    <lineage>
        <taxon>Bacteria</taxon>
        <taxon>Bacillati</taxon>
        <taxon>Actinomycetota</taxon>
        <taxon>Rubrobacteria</taxon>
        <taxon>Rubrobacterales</taxon>
        <taxon>Rubrobacteraceae</taxon>
        <taxon>Rubrobacter</taxon>
    </lineage>
</organism>
<feature type="chain" id="PRO_0000260933" description="Large ribosomal subunit protein uL6">
    <location>
        <begin position="1"/>
        <end position="177"/>
    </location>
</feature>
<comment type="function">
    <text evidence="1">This protein binds to the 23S rRNA, and is important in its secondary structure. It is located near the subunit interface in the base of the L7/L12 stalk, and near the tRNA binding site of the peptidyltransferase center.</text>
</comment>
<comment type="subunit">
    <text evidence="1">Part of the 50S ribosomal subunit.</text>
</comment>
<comment type="similarity">
    <text evidence="1">Belongs to the universal ribosomal protein uL6 family.</text>
</comment>
<name>RL6_RUBXD</name>
<sequence length="177" mass="19095">MSRIGRAPVEVPGGVSVEISARSVKVRGPKGELTVPVGRGVSVREEDGKLLVERSSDAPQHRAMHGLTRSLLHNAVVGVTDGFAKTLQISGVGYRAQLQGQNVVLQVGYSHPVTVQPREGIQLEVPNPTTIVVRGIDKQQVGQMAAEIRRVRPPEPYKGKGIRYEGEQVRRKVGKAG</sequence>
<dbReference type="EMBL" id="CP000386">
    <property type="protein sequence ID" value="ABG05084.1"/>
    <property type="molecule type" value="Genomic_DNA"/>
</dbReference>
<dbReference type="RefSeq" id="WP_011565099.1">
    <property type="nucleotide sequence ID" value="NC_008148.1"/>
</dbReference>
<dbReference type="SMR" id="Q1AU44"/>
<dbReference type="STRING" id="266117.Rxyl_2140"/>
<dbReference type="KEGG" id="rxy:Rxyl_2140"/>
<dbReference type="eggNOG" id="COG0097">
    <property type="taxonomic scope" value="Bacteria"/>
</dbReference>
<dbReference type="HOGENOM" id="CLU_065464_1_2_11"/>
<dbReference type="OrthoDB" id="9805007at2"/>
<dbReference type="PhylomeDB" id="Q1AU44"/>
<dbReference type="Proteomes" id="UP000006637">
    <property type="component" value="Chromosome"/>
</dbReference>
<dbReference type="GO" id="GO:0022625">
    <property type="term" value="C:cytosolic large ribosomal subunit"/>
    <property type="evidence" value="ECO:0007669"/>
    <property type="project" value="TreeGrafter"/>
</dbReference>
<dbReference type="GO" id="GO:0019843">
    <property type="term" value="F:rRNA binding"/>
    <property type="evidence" value="ECO:0007669"/>
    <property type="project" value="UniProtKB-UniRule"/>
</dbReference>
<dbReference type="GO" id="GO:0003735">
    <property type="term" value="F:structural constituent of ribosome"/>
    <property type="evidence" value="ECO:0007669"/>
    <property type="project" value="InterPro"/>
</dbReference>
<dbReference type="GO" id="GO:0002181">
    <property type="term" value="P:cytoplasmic translation"/>
    <property type="evidence" value="ECO:0007669"/>
    <property type="project" value="TreeGrafter"/>
</dbReference>
<dbReference type="FunFam" id="3.90.930.12:FF:000001">
    <property type="entry name" value="50S ribosomal protein L6"/>
    <property type="match status" value="1"/>
</dbReference>
<dbReference type="FunFam" id="3.90.930.12:FF:000002">
    <property type="entry name" value="50S ribosomal protein L6"/>
    <property type="match status" value="1"/>
</dbReference>
<dbReference type="Gene3D" id="3.90.930.12">
    <property type="entry name" value="Ribosomal protein L6, alpha-beta domain"/>
    <property type="match status" value="2"/>
</dbReference>
<dbReference type="HAMAP" id="MF_01365_B">
    <property type="entry name" value="Ribosomal_uL6_B"/>
    <property type="match status" value="1"/>
</dbReference>
<dbReference type="InterPro" id="IPR000702">
    <property type="entry name" value="Ribosomal_uL6-like"/>
</dbReference>
<dbReference type="InterPro" id="IPR036789">
    <property type="entry name" value="Ribosomal_uL6-like_a/b-dom_sf"/>
</dbReference>
<dbReference type="InterPro" id="IPR020040">
    <property type="entry name" value="Ribosomal_uL6_a/b-dom"/>
</dbReference>
<dbReference type="InterPro" id="IPR019906">
    <property type="entry name" value="Ribosomal_uL6_bac-type"/>
</dbReference>
<dbReference type="InterPro" id="IPR002358">
    <property type="entry name" value="Ribosomal_uL6_CS"/>
</dbReference>
<dbReference type="NCBIfam" id="TIGR03654">
    <property type="entry name" value="L6_bact"/>
    <property type="match status" value="1"/>
</dbReference>
<dbReference type="PANTHER" id="PTHR11655">
    <property type="entry name" value="60S/50S RIBOSOMAL PROTEIN L6/L9"/>
    <property type="match status" value="1"/>
</dbReference>
<dbReference type="PANTHER" id="PTHR11655:SF14">
    <property type="entry name" value="LARGE RIBOSOMAL SUBUNIT PROTEIN UL6M"/>
    <property type="match status" value="1"/>
</dbReference>
<dbReference type="Pfam" id="PF00347">
    <property type="entry name" value="Ribosomal_L6"/>
    <property type="match status" value="2"/>
</dbReference>
<dbReference type="PIRSF" id="PIRSF002162">
    <property type="entry name" value="Ribosomal_L6"/>
    <property type="match status" value="1"/>
</dbReference>
<dbReference type="PRINTS" id="PR00059">
    <property type="entry name" value="RIBOSOMALL6"/>
</dbReference>
<dbReference type="SUPFAM" id="SSF56053">
    <property type="entry name" value="Ribosomal protein L6"/>
    <property type="match status" value="2"/>
</dbReference>
<dbReference type="PROSITE" id="PS00525">
    <property type="entry name" value="RIBOSOMAL_L6_1"/>
    <property type="match status" value="1"/>
</dbReference>
<keyword id="KW-1185">Reference proteome</keyword>
<keyword id="KW-0687">Ribonucleoprotein</keyword>
<keyword id="KW-0689">Ribosomal protein</keyword>
<keyword id="KW-0694">RNA-binding</keyword>
<keyword id="KW-0699">rRNA-binding</keyword>
<evidence type="ECO:0000255" key="1">
    <source>
        <dbReference type="HAMAP-Rule" id="MF_01365"/>
    </source>
</evidence>
<evidence type="ECO:0000305" key="2"/>
<accession>Q1AU44</accession>
<gene>
    <name evidence="1" type="primary">rplF</name>
    <name type="ordered locus">Rxyl_2140</name>
</gene>
<protein>
    <recommendedName>
        <fullName evidence="1">Large ribosomal subunit protein uL6</fullName>
    </recommendedName>
    <alternativeName>
        <fullName evidence="2">50S ribosomal protein L6</fullName>
    </alternativeName>
</protein>
<proteinExistence type="inferred from homology"/>
<reference key="1">
    <citation type="submission" date="2006-06" db="EMBL/GenBank/DDBJ databases">
        <title>Complete sequence of Rubrobacter xylanophilus DSM 9941.</title>
        <authorList>
            <consortium name="US DOE Joint Genome Institute"/>
            <person name="Copeland A."/>
            <person name="Lucas S."/>
            <person name="Lapidus A."/>
            <person name="Barry K."/>
            <person name="Detter J.C."/>
            <person name="Glavina del Rio T."/>
            <person name="Hammon N."/>
            <person name="Israni S."/>
            <person name="Dalin E."/>
            <person name="Tice H."/>
            <person name="Pitluck S."/>
            <person name="Munk A.C."/>
            <person name="Brettin T."/>
            <person name="Bruce D."/>
            <person name="Han C."/>
            <person name="Tapia R."/>
            <person name="Gilna P."/>
            <person name="Schmutz J."/>
            <person name="Larimer F."/>
            <person name="Land M."/>
            <person name="Hauser L."/>
            <person name="Kyrpides N."/>
            <person name="Lykidis A."/>
            <person name="da Costa M.S."/>
            <person name="Rainey F.A."/>
            <person name="Empadinhas N."/>
            <person name="Jolivet E."/>
            <person name="Battista J.R."/>
            <person name="Richardson P."/>
        </authorList>
    </citation>
    <scope>NUCLEOTIDE SEQUENCE [LARGE SCALE GENOMIC DNA]</scope>
    <source>
        <strain>DSM 9941 / JCM 11954 / NBRC 16129 / PRD-1</strain>
    </source>
</reference>